<name>RL15_PSEPG</name>
<gene>
    <name evidence="1" type="primary">rplO</name>
    <name type="ordered locus">PputGB1_0503</name>
</gene>
<accession>B0KK86</accession>
<sequence length="144" mass="15189">MKLNDLSPAPGSRREKHRPGRGIGSGLGKTGGRGHKGQTSRSGGSIAPGFEGGQQPLHRRLPKFGFVSLKAMDRAEVRLSELAKVEGDVISVQSLKDANVINQHIQRVKIMLSGEVTRAVTIKGIAATKGARAAIEAAGGKFEE</sequence>
<proteinExistence type="inferred from homology"/>
<keyword id="KW-0687">Ribonucleoprotein</keyword>
<keyword id="KW-0689">Ribosomal protein</keyword>
<keyword id="KW-0694">RNA-binding</keyword>
<keyword id="KW-0699">rRNA-binding</keyword>
<feature type="chain" id="PRO_1000086723" description="Large ribosomal subunit protein uL15">
    <location>
        <begin position="1"/>
        <end position="144"/>
    </location>
</feature>
<feature type="region of interest" description="Disordered" evidence="2">
    <location>
        <begin position="1"/>
        <end position="57"/>
    </location>
</feature>
<feature type="compositionally biased region" description="Gly residues" evidence="2">
    <location>
        <begin position="21"/>
        <end position="31"/>
    </location>
</feature>
<comment type="function">
    <text evidence="1">Binds to the 23S rRNA.</text>
</comment>
<comment type="subunit">
    <text evidence="1">Part of the 50S ribosomal subunit.</text>
</comment>
<comment type="similarity">
    <text evidence="1">Belongs to the universal ribosomal protein uL15 family.</text>
</comment>
<protein>
    <recommendedName>
        <fullName evidence="1">Large ribosomal subunit protein uL15</fullName>
    </recommendedName>
    <alternativeName>
        <fullName evidence="3">50S ribosomal protein L15</fullName>
    </alternativeName>
</protein>
<organism>
    <name type="scientific">Pseudomonas putida (strain GB-1)</name>
    <dbReference type="NCBI Taxonomy" id="76869"/>
    <lineage>
        <taxon>Bacteria</taxon>
        <taxon>Pseudomonadati</taxon>
        <taxon>Pseudomonadota</taxon>
        <taxon>Gammaproteobacteria</taxon>
        <taxon>Pseudomonadales</taxon>
        <taxon>Pseudomonadaceae</taxon>
        <taxon>Pseudomonas</taxon>
    </lineage>
</organism>
<reference key="1">
    <citation type="submission" date="2008-01" db="EMBL/GenBank/DDBJ databases">
        <title>Complete sequence of Pseudomonas putida GB-1.</title>
        <authorList>
            <consortium name="US DOE Joint Genome Institute"/>
            <person name="Copeland A."/>
            <person name="Lucas S."/>
            <person name="Lapidus A."/>
            <person name="Barry K."/>
            <person name="Glavina del Rio T."/>
            <person name="Dalin E."/>
            <person name="Tice H."/>
            <person name="Pitluck S."/>
            <person name="Bruce D."/>
            <person name="Goodwin L."/>
            <person name="Chertkov O."/>
            <person name="Brettin T."/>
            <person name="Detter J.C."/>
            <person name="Han C."/>
            <person name="Kuske C.R."/>
            <person name="Schmutz J."/>
            <person name="Larimer F."/>
            <person name="Land M."/>
            <person name="Hauser L."/>
            <person name="Kyrpides N."/>
            <person name="Kim E."/>
            <person name="McCarthy J.K."/>
            <person name="Richardson P."/>
        </authorList>
    </citation>
    <scope>NUCLEOTIDE SEQUENCE [LARGE SCALE GENOMIC DNA]</scope>
    <source>
        <strain>GB-1</strain>
    </source>
</reference>
<evidence type="ECO:0000255" key="1">
    <source>
        <dbReference type="HAMAP-Rule" id="MF_01341"/>
    </source>
</evidence>
<evidence type="ECO:0000256" key="2">
    <source>
        <dbReference type="SAM" id="MobiDB-lite"/>
    </source>
</evidence>
<evidence type="ECO:0000305" key="3"/>
<dbReference type="EMBL" id="CP000926">
    <property type="protein sequence ID" value="ABY96414.1"/>
    <property type="molecule type" value="Genomic_DNA"/>
</dbReference>
<dbReference type="RefSeq" id="WP_003255461.1">
    <property type="nucleotide sequence ID" value="NC_010322.1"/>
</dbReference>
<dbReference type="SMR" id="B0KK86"/>
<dbReference type="GeneID" id="83677771"/>
<dbReference type="KEGG" id="ppg:PputGB1_0503"/>
<dbReference type="eggNOG" id="COG0200">
    <property type="taxonomic scope" value="Bacteria"/>
</dbReference>
<dbReference type="HOGENOM" id="CLU_055188_4_2_6"/>
<dbReference type="Proteomes" id="UP000002157">
    <property type="component" value="Chromosome"/>
</dbReference>
<dbReference type="GO" id="GO:0022625">
    <property type="term" value="C:cytosolic large ribosomal subunit"/>
    <property type="evidence" value="ECO:0007669"/>
    <property type="project" value="TreeGrafter"/>
</dbReference>
<dbReference type="GO" id="GO:0019843">
    <property type="term" value="F:rRNA binding"/>
    <property type="evidence" value="ECO:0007669"/>
    <property type="project" value="UniProtKB-UniRule"/>
</dbReference>
<dbReference type="GO" id="GO:0003735">
    <property type="term" value="F:structural constituent of ribosome"/>
    <property type="evidence" value="ECO:0007669"/>
    <property type="project" value="InterPro"/>
</dbReference>
<dbReference type="GO" id="GO:0006412">
    <property type="term" value="P:translation"/>
    <property type="evidence" value="ECO:0007669"/>
    <property type="project" value="UniProtKB-UniRule"/>
</dbReference>
<dbReference type="FunFam" id="3.100.10.10:FF:000003">
    <property type="entry name" value="50S ribosomal protein L15"/>
    <property type="match status" value="1"/>
</dbReference>
<dbReference type="Gene3D" id="3.100.10.10">
    <property type="match status" value="1"/>
</dbReference>
<dbReference type="HAMAP" id="MF_01341">
    <property type="entry name" value="Ribosomal_uL15"/>
    <property type="match status" value="1"/>
</dbReference>
<dbReference type="InterPro" id="IPR030878">
    <property type="entry name" value="Ribosomal_uL15"/>
</dbReference>
<dbReference type="InterPro" id="IPR021131">
    <property type="entry name" value="Ribosomal_uL15/eL18"/>
</dbReference>
<dbReference type="InterPro" id="IPR036227">
    <property type="entry name" value="Ribosomal_uL15/eL18_sf"/>
</dbReference>
<dbReference type="InterPro" id="IPR005749">
    <property type="entry name" value="Ribosomal_uL15_bac-type"/>
</dbReference>
<dbReference type="InterPro" id="IPR001196">
    <property type="entry name" value="Ribosomal_uL15_CS"/>
</dbReference>
<dbReference type="NCBIfam" id="TIGR01071">
    <property type="entry name" value="rplO_bact"/>
    <property type="match status" value="1"/>
</dbReference>
<dbReference type="PANTHER" id="PTHR12934">
    <property type="entry name" value="50S RIBOSOMAL PROTEIN L15"/>
    <property type="match status" value="1"/>
</dbReference>
<dbReference type="PANTHER" id="PTHR12934:SF11">
    <property type="entry name" value="LARGE RIBOSOMAL SUBUNIT PROTEIN UL15M"/>
    <property type="match status" value="1"/>
</dbReference>
<dbReference type="Pfam" id="PF00828">
    <property type="entry name" value="Ribosomal_L27A"/>
    <property type="match status" value="1"/>
</dbReference>
<dbReference type="SUPFAM" id="SSF52080">
    <property type="entry name" value="Ribosomal proteins L15p and L18e"/>
    <property type="match status" value="1"/>
</dbReference>
<dbReference type="PROSITE" id="PS00475">
    <property type="entry name" value="RIBOSOMAL_L15"/>
    <property type="match status" value="1"/>
</dbReference>